<protein>
    <recommendedName>
        <fullName>Innexin-10</fullName>
    </recommendedName>
    <alternativeName>
        <fullName>Protein opu-10</fullName>
    </alternativeName>
</protein>
<feature type="chain" id="PRO_0000208511" description="Innexin-10">
    <location>
        <begin position="1"/>
        <end position="559"/>
    </location>
</feature>
<feature type="transmembrane region" description="Helical" evidence="3">
    <location>
        <begin position="28"/>
        <end position="48"/>
    </location>
</feature>
<feature type="transmembrane region" description="Helical" evidence="3">
    <location>
        <begin position="102"/>
        <end position="122"/>
    </location>
</feature>
<feature type="transmembrane region" description="Helical" evidence="3">
    <location>
        <begin position="182"/>
        <end position="202"/>
    </location>
</feature>
<feature type="transmembrane region" description="Helical" evidence="3">
    <location>
        <begin position="283"/>
        <end position="303"/>
    </location>
</feature>
<feature type="region of interest" description="Disordered" evidence="4">
    <location>
        <begin position="488"/>
        <end position="514"/>
    </location>
</feature>
<feature type="region of interest" description="Disordered" evidence="4">
    <location>
        <begin position="527"/>
        <end position="559"/>
    </location>
</feature>
<feature type="compositionally biased region" description="Low complexity" evidence="4">
    <location>
        <begin position="503"/>
        <end position="514"/>
    </location>
</feature>
<feature type="compositionally biased region" description="Polar residues" evidence="4">
    <location>
        <begin position="528"/>
        <end position="559"/>
    </location>
</feature>
<dbReference type="EMBL" id="FO080648">
    <property type="protein sequence ID" value="CCD65454.1"/>
    <property type="molecule type" value="Genomic_DNA"/>
</dbReference>
<dbReference type="PIR" id="T29693">
    <property type="entry name" value="T29693"/>
</dbReference>
<dbReference type="RefSeq" id="NP_001024139.1">
    <property type="nucleotide sequence ID" value="NM_001028968.4"/>
</dbReference>
<dbReference type="SMR" id="Q22549"/>
<dbReference type="FunCoup" id="Q22549">
    <property type="interactions" value="173"/>
</dbReference>
<dbReference type="STRING" id="6239.T18H9.5a.1"/>
<dbReference type="PaxDb" id="6239-T18H9.5a"/>
<dbReference type="EnsemblMetazoa" id="T18H9.5a.1">
    <property type="protein sequence ID" value="T18H9.5a.1"/>
    <property type="gene ID" value="WBGene00002132"/>
</dbReference>
<dbReference type="GeneID" id="188580"/>
<dbReference type="KEGG" id="cel:CELE_T18H9.5"/>
<dbReference type="UCSC" id="T18H9.5a">
    <property type="organism name" value="c. elegans"/>
</dbReference>
<dbReference type="AGR" id="WB:WBGene00002132"/>
<dbReference type="CTD" id="188580"/>
<dbReference type="WormBase" id="T18H9.5a">
    <property type="protein sequence ID" value="CE04973"/>
    <property type="gene ID" value="WBGene00002132"/>
    <property type="gene designation" value="inx-10"/>
</dbReference>
<dbReference type="eggNOG" id="ENOG502QT3V">
    <property type="taxonomic scope" value="Eukaryota"/>
</dbReference>
<dbReference type="InParanoid" id="Q22549"/>
<dbReference type="OMA" id="IQEHTIQ"/>
<dbReference type="OrthoDB" id="5867527at2759"/>
<dbReference type="PhylomeDB" id="Q22549"/>
<dbReference type="PRO" id="PR:Q22549"/>
<dbReference type="Proteomes" id="UP000001940">
    <property type="component" value="Chromosome V"/>
</dbReference>
<dbReference type="Bgee" id="WBGene00002132">
    <property type="expression patterns" value="Expressed in pharyngeal muscle cell (C elegans) and 3 other cell types or tissues"/>
</dbReference>
<dbReference type="ExpressionAtlas" id="Q22549">
    <property type="expression patterns" value="baseline and differential"/>
</dbReference>
<dbReference type="GO" id="GO:0005921">
    <property type="term" value="C:gap junction"/>
    <property type="evidence" value="ECO:0000314"/>
    <property type="project" value="WormBase"/>
</dbReference>
<dbReference type="GO" id="GO:0005886">
    <property type="term" value="C:plasma membrane"/>
    <property type="evidence" value="ECO:0000250"/>
    <property type="project" value="UniProtKB"/>
</dbReference>
<dbReference type="GO" id="GO:0005243">
    <property type="term" value="F:gap junction channel activity"/>
    <property type="evidence" value="ECO:0000250"/>
    <property type="project" value="UniProtKB"/>
</dbReference>
<dbReference type="GO" id="GO:0055077">
    <property type="term" value="F:gap junction hemi-channel activity"/>
    <property type="evidence" value="ECO:0000250"/>
    <property type="project" value="UniProtKB"/>
</dbReference>
<dbReference type="GO" id="GO:0034220">
    <property type="term" value="P:monoatomic ion transmembrane transport"/>
    <property type="evidence" value="ECO:0007669"/>
    <property type="project" value="UniProtKB-KW"/>
</dbReference>
<dbReference type="InterPro" id="IPR000990">
    <property type="entry name" value="Innexin"/>
</dbReference>
<dbReference type="PANTHER" id="PTHR11893">
    <property type="entry name" value="INNEXIN"/>
    <property type="match status" value="1"/>
</dbReference>
<dbReference type="PANTHER" id="PTHR11893:SF14">
    <property type="entry name" value="INNEXIN-10"/>
    <property type="match status" value="1"/>
</dbReference>
<dbReference type="Pfam" id="PF00876">
    <property type="entry name" value="Innexin"/>
    <property type="match status" value="1"/>
</dbReference>
<dbReference type="PRINTS" id="PR01262">
    <property type="entry name" value="INNEXIN"/>
</dbReference>
<dbReference type="PROSITE" id="PS51013">
    <property type="entry name" value="PANNEXIN"/>
    <property type="match status" value="1"/>
</dbReference>
<keyword id="KW-0965">Cell junction</keyword>
<keyword id="KW-1003">Cell membrane</keyword>
<keyword id="KW-0303">Gap junction</keyword>
<keyword id="KW-0407">Ion channel</keyword>
<keyword id="KW-0406">Ion transport</keyword>
<keyword id="KW-0472">Membrane</keyword>
<keyword id="KW-1185">Reference proteome</keyword>
<keyword id="KW-0812">Transmembrane</keyword>
<keyword id="KW-1133">Transmembrane helix</keyword>
<keyword id="KW-0813">Transport</keyword>
<reference key="1">
    <citation type="journal article" date="1998" name="Science">
        <title>Genome sequence of the nematode C. elegans: a platform for investigating biology.</title>
        <authorList>
            <consortium name="The C. elegans sequencing consortium"/>
        </authorList>
    </citation>
    <scope>NUCLEOTIDE SEQUENCE [LARGE SCALE GENOMIC DNA]</scope>
    <source>
        <strain>Bristol N2</strain>
    </source>
</reference>
<evidence type="ECO:0000250" key="1"/>
<evidence type="ECO:0000250" key="2">
    <source>
        <dbReference type="UniProtKB" id="O61715"/>
    </source>
</evidence>
<evidence type="ECO:0000255" key="3">
    <source>
        <dbReference type="PROSITE-ProRule" id="PRU00351"/>
    </source>
</evidence>
<evidence type="ECO:0000256" key="4">
    <source>
        <dbReference type="SAM" id="MobiDB-lite"/>
    </source>
</evidence>
<evidence type="ECO:0000305" key="5"/>
<name>INX10_CAEEL</name>
<organism>
    <name type="scientific">Caenorhabditis elegans</name>
    <dbReference type="NCBI Taxonomy" id="6239"/>
    <lineage>
        <taxon>Eukaryota</taxon>
        <taxon>Metazoa</taxon>
        <taxon>Ecdysozoa</taxon>
        <taxon>Nematoda</taxon>
        <taxon>Chromadorea</taxon>
        <taxon>Rhabditida</taxon>
        <taxon>Rhabditina</taxon>
        <taxon>Rhabditomorpha</taxon>
        <taxon>Rhabditoidea</taxon>
        <taxon>Rhabditidae</taxon>
        <taxon>Peloderinae</taxon>
        <taxon>Caenorhabditis</taxon>
    </lineage>
</organism>
<accession>Q22549</accession>
<gene>
    <name type="primary">inx-10</name>
    <name type="synonym">opu-10</name>
    <name type="ORF">T18H9.5</name>
</gene>
<proteinExistence type="inferred from homology"/>
<sequence length="559" mass="65334">MVLAAVLSMLRYVGGSDDRDFVDRLHSYFTCNLLIGLAVLVSFKQFGGKPVECLVPDIFSSSWEQYAENYCWASDTYYVPTNEPVAGLQSDEKRQRKISYYQWVPFFLLLEAACFRLPSLLWKYLAGHSGIKINEIVKLSSDPNNIKPDIKRANIKSLTVHLQGALRFHRRLQKKQIRPHRFLWLFNLPYSAFFVTAMYLCTKFFYLANVCLQLMFMNRFLETDKYKWYGMGALVDLLNGTTWEQSGMFPRVSLCDFDVRVMGNMQEHTIQCVLVINIFNEKIFILLWFWYLALLVFTFGSFFYWLLVSLWRHLNVRFIIRHLEMSDIAFDSSEDGAQEKVNRFISNYLKSDGVFVIRMMTLQSGVIFGTDLVQELWRNFHGSEPQLKRSNSAPKIEEREQWWPAYPSLVNPINPWRYRDENQANALRWRRALGANVDNSIATQDLMEKLLPQNAHMRPSDDELLNRQPIAVQASYIDDESDGKLKNEEKQNQQNATQPPYCYTNQNPTPYQNQNQIQNQNQYSNYYRTPSLSRGTDSRPVSTATDTDQTKKQSMSTFK</sequence>
<comment type="function">
    <text evidence="2">Structural component of the gap junctions.</text>
</comment>
<comment type="subcellular location">
    <subcellularLocation>
        <location evidence="5">Cell membrane</location>
        <topology evidence="3">Multi-pass membrane protein</topology>
    </subcellularLocation>
    <subcellularLocation>
        <location evidence="1">Cell junction</location>
        <location evidence="1">Gap junction</location>
    </subcellularLocation>
</comment>
<comment type="similarity">
    <text evidence="3">Belongs to the pannexin family.</text>
</comment>